<dbReference type="EC" id="2.7.2.8" evidence="1"/>
<dbReference type="EMBL" id="CP000386">
    <property type="protein sequence ID" value="ABG05798.1"/>
    <property type="molecule type" value="Genomic_DNA"/>
</dbReference>
<dbReference type="RefSeq" id="WP_011565807.1">
    <property type="nucleotide sequence ID" value="NC_008148.1"/>
</dbReference>
<dbReference type="SMR" id="Q1AS30"/>
<dbReference type="STRING" id="266117.Rxyl_2887"/>
<dbReference type="KEGG" id="rxy:Rxyl_2887"/>
<dbReference type="eggNOG" id="COG0548">
    <property type="taxonomic scope" value="Bacteria"/>
</dbReference>
<dbReference type="HOGENOM" id="CLU_053680_1_0_11"/>
<dbReference type="UniPathway" id="UPA00068">
    <property type="reaction ID" value="UER00107"/>
</dbReference>
<dbReference type="Proteomes" id="UP000006637">
    <property type="component" value="Chromosome"/>
</dbReference>
<dbReference type="GO" id="GO:0005737">
    <property type="term" value="C:cytoplasm"/>
    <property type="evidence" value="ECO:0007669"/>
    <property type="project" value="UniProtKB-SubCell"/>
</dbReference>
<dbReference type="GO" id="GO:0003991">
    <property type="term" value="F:acetylglutamate kinase activity"/>
    <property type="evidence" value="ECO:0007669"/>
    <property type="project" value="UniProtKB-UniRule"/>
</dbReference>
<dbReference type="GO" id="GO:0005524">
    <property type="term" value="F:ATP binding"/>
    <property type="evidence" value="ECO:0007669"/>
    <property type="project" value="UniProtKB-UniRule"/>
</dbReference>
<dbReference type="GO" id="GO:0042450">
    <property type="term" value="P:arginine biosynthetic process via ornithine"/>
    <property type="evidence" value="ECO:0007669"/>
    <property type="project" value="UniProtKB-UniRule"/>
</dbReference>
<dbReference type="GO" id="GO:0006526">
    <property type="term" value="P:L-arginine biosynthetic process"/>
    <property type="evidence" value="ECO:0007669"/>
    <property type="project" value="UniProtKB-UniPathway"/>
</dbReference>
<dbReference type="CDD" id="cd04238">
    <property type="entry name" value="AAK_NAGK-like"/>
    <property type="match status" value="1"/>
</dbReference>
<dbReference type="Gene3D" id="3.40.1160.10">
    <property type="entry name" value="Acetylglutamate kinase-like"/>
    <property type="match status" value="1"/>
</dbReference>
<dbReference type="HAMAP" id="MF_00082">
    <property type="entry name" value="ArgB"/>
    <property type="match status" value="1"/>
</dbReference>
<dbReference type="InterPro" id="IPR036393">
    <property type="entry name" value="AceGlu_kinase-like_sf"/>
</dbReference>
<dbReference type="InterPro" id="IPR004662">
    <property type="entry name" value="AcgluKinase_fam"/>
</dbReference>
<dbReference type="InterPro" id="IPR037528">
    <property type="entry name" value="ArgB"/>
</dbReference>
<dbReference type="InterPro" id="IPR001048">
    <property type="entry name" value="Asp/Glu/Uridylate_kinase"/>
</dbReference>
<dbReference type="NCBIfam" id="TIGR00761">
    <property type="entry name" value="argB"/>
    <property type="match status" value="1"/>
</dbReference>
<dbReference type="PANTHER" id="PTHR23342">
    <property type="entry name" value="N-ACETYLGLUTAMATE SYNTHASE"/>
    <property type="match status" value="1"/>
</dbReference>
<dbReference type="PANTHER" id="PTHR23342:SF0">
    <property type="entry name" value="N-ACETYLGLUTAMATE SYNTHASE, MITOCHONDRIAL"/>
    <property type="match status" value="1"/>
</dbReference>
<dbReference type="Pfam" id="PF00696">
    <property type="entry name" value="AA_kinase"/>
    <property type="match status" value="1"/>
</dbReference>
<dbReference type="PIRSF" id="PIRSF000728">
    <property type="entry name" value="NAGK"/>
    <property type="match status" value="1"/>
</dbReference>
<dbReference type="SUPFAM" id="SSF53633">
    <property type="entry name" value="Carbamate kinase-like"/>
    <property type="match status" value="1"/>
</dbReference>
<accession>Q1AS30</accession>
<protein>
    <recommendedName>
        <fullName evidence="1">Acetylglutamate kinase</fullName>
        <ecNumber evidence="1">2.7.2.8</ecNumber>
    </recommendedName>
    <alternativeName>
        <fullName evidence="1">N-acetyl-L-glutamate 5-phosphotransferase</fullName>
    </alternativeName>
    <alternativeName>
        <fullName evidence="1">NAG kinase</fullName>
        <shortName evidence="1">NAGK</shortName>
    </alternativeName>
</protein>
<sequence length="253" mass="25189">MRTVVVKVGGASVAGGALEDLPGVVSGGARVAVVHGGGRQLTRMLDSLGVPTSFREGLRVTDERTLEVAEMVFAGSVNKQLARGLLALGVPAAGVSGTDGPVLRVEPVPGLGRVGRVVAVETRLLETLWGGGFVPVVAPLGLGPRGAYNVNADDAAAALAVALGAGELLLLTDVDGLLRDDEPVPALTPAECERYVSSGVASGGMAPKLRAAAEAARGGVPARIINGGRRGALAGALAGGQVGTLVRQEGAFA</sequence>
<organism>
    <name type="scientific">Rubrobacter xylanophilus (strain DSM 9941 / JCM 11954 / NBRC 16129 / PRD-1)</name>
    <dbReference type="NCBI Taxonomy" id="266117"/>
    <lineage>
        <taxon>Bacteria</taxon>
        <taxon>Bacillati</taxon>
        <taxon>Actinomycetota</taxon>
        <taxon>Rubrobacteria</taxon>
        <taxon>Rubrobacterales</taxon>
        <taxon>Rubrobacteraceae</taxon>
        <taxon>Rubrobacter</taxon>
    </lineage>
</organism>
<comment type="function">
    <text evidence="1">Catalyzes the ATP-dependent phosphorylation of N-acetyl-L-glutamate.</text>
</comment>
<comment type="catalytic activity">
    <reaction evidence="1">
        <text>N-acetyl-L-glutamate + ATP = N-acetyl-L-glutamyl 5-phosphate + ADP</text>
        <dbReference type="Rhea" id="RHEA:14629"/>
        <dbReference type="ChEBI" id="CHEBI:30616"/>
        <dbReference type="ChEBI" id="CHEBI:44337"/>
        <dbReference type="ChEBI" id="CHEBI:57936"/>
        <dbReference type="ChEBI" id="CHEBI:456216"/>
        <dbReference type="EC" id="2.7.2.8"/>
    </reaction>
</comment>
<comment type="pathway">
    <text evidence="1">Amino-acid biosynthesis; L-arginine biosynthesis; N(2)-acetyl-L-ornithine from L-glutamate: step 2/4.</text>
</comment>
<comment type="subcellular location">
    <subcellularLocation>
        <location evidence="1">Cytoplasm</location>
    </subcellularLocation>
</comment>
<comment type="similarity">
    <text evidence="1">Belongs to the acetylglutamate kinase family. ArgB subfamily.</text>
</comment>
<keyword id="KW-0028">Amino-acid biosynthesis</keyword>
<keyword id="KW-0055">Arginine biosynthesis</keyword>
<keyword id="KW-0067">ATP-binding</keyword>
<keyword id="KW-0963">Cytoplasm</keyword>
<keyword id="KW-0418">Kinase</keyword>
<keyword id="KW-0547">Nucleotide-binding</keyword>
<keyword id="KW-1185">Reference proteome</keyword>
<keyword id="KW-0808">Transferase</keyword>
<reference key="1">
    <citation type="submission" date="2006-06" db="EMBL/GenBank/DDBJ databases">
        <title>Complete sequence of Rubrobacter xylanophilus DSM 9941.</title>
        <authorList>
            <consortium name="US DOE Joint Genome Institute"/>
            <person name="Copeland A."/>
            <person name="Lucas S."/>
            <person name="Lapidus A."/>
            <person name="Barry K."/>
            <person name="Detter J.C."/>
            <person name="Glavina del Rio T."/>
            <person name="Hammon N."/>
            <person name="Israni S."/>
            <person name="Dalin E."/>
            <person name="Tice H."/>
            <person name="Pitluck S."/>
            <person name="Munk A.C."/>
            <person name="Brettin T."/>
            <person name="Bruce D."/>
            <person name="Han C."/>
            <person name="Tapia R."/>
            <person name="Gilna P."/>
            <person name="Schmutz J."/>
            <person name="Larimer F."/>
            <person name="Land M."/>
            <person name="Hauser L."/>
            <person name="Kyrpides N."/>
            <person name="Lykidis A."/>
            <person name="da Costa M.S."/>
            <person name="Rainey F.A."/>
            <person name="Empadinhas N."/>
            <person name="Jolivet E."/>
            <person name="Battista J.R."/>
            <person name="Richardson P."/>
        </authorList>
    </citation>
    <scope>NUCLEOTIDE SEQUENCE [LARGE SCALE GENOMIC DNA]</scope>
    <source>
        <strain>DSM 9941 / JCM 11954 / NBRC 16129 / PRD-1</strain>
    </source>
</reference>
<feature type="chain" id="PRO_0000264752" description="Acetylglutamate kinase">
    <location>
        <begin position="1"/>
        <end position="253"/>
    </location>
</feature>
<feature type="binding site" evidence="1">
    <location>
        <begin position="37"/>
        <end position="38"/>
    </location>
    <ligand>
        <name>substrate</name>
    </ligand>
</feature>
<feature type="binding site" evidence="1">
    <location>
        <position position="59"/>
    </location>
    <ligand>
        <name>substrate</name>
    </ligand>
</feature>
<feature type="binding site" evidence="1">
    <location>
        <position position="149"/>
    </location>
    <ligand>
        <name>substrate</name>
    </ligand>
</feature>
<feature type="site" description="Transition state stabilizer" evidence="1">
    <location>
        <position position="7"/>
    </location>
</feature>
<feature type="site" description="Transition state stabilizer" evidence="1">
    <location>
        <position position="208"/>
    </location>
</feature>
<proteinExistence type="inferred from homology"/>
<gene>
    <name evidence="1" type="primary">argB</name>
    <name type="ordered locus">Rxyl_2887</name>
</gene>
<name>ARGB_RUBXD</name>
<evidence type="ECO:0000255" key="1">
    <source>
        <dbReference type="HAMAP-Rule" id="MF_00082"/>
    </source>
</evidence>